<reference key="1">
    <citation type="journal article" date="2006" name="J. Bacteriol.">
        <title>Pathogenomic sequence analysis of Bacillus cereus and Bacillus thuringiensis isolates closely related to Bacillus anthracis.</title>
        <authorList>
            <person name="Han C.S."/>
            <person name="Xie G."/>
            <person name="Challacombe J.F."/>
            <person name="Altherr M.R."/>
            <person name="Bhotika S.S."/>
            <person name="Bruce D."/>
            <person name="Campbell C.S."/>
            <person name="Campbell M.L."/>
            <person name="Chen J."/>
            <person name="Chertkov O."/>
            <person name="Cleland C."/>
            <person name="Dimitrijevic M."/>
            <person name="Doggett N.A."/>
            <person name="Fawcett J.J."/>
            <person name="Glavina T."/>
            <person name="Goodwin L.A."/>
            <person name="Hill K.K."/>
            <person name="Hitchcock P."/>
            <person name="Jackson P.J."/>
            <person name="Keim P."/>
            <person name="Kewalramani A.R."/>
            <person name="Longmire J."/>
            <person name="Lucas S."/>
            <person name="Malfatti S."/>
            <person name="McMurry K."/>
            <person name="Meincke L.J."/>
            <person name="Misra M."/>
            <person name="Moseman B.L."/>
            <person name="Mundt M."/>
            <person name="Munk A.C."/>
            <person name="Okinaka R.T."/>
            <person name="Parson-Quintana B."/>
            <person name="Reilly L.P."/>
            <person name="Richardson P."/>
            <person name="Robinson D.L."/>
            <person name="Rubin E."/>
            <person name="Saunders E."/>
            <person name="Tapia R."/>
            <person name="Tesmer J.G."/>
            <person name="Thayer N."/>
            <person name="Thompson L.S."/>
            <person name="Tice H."/>
            <person name="Ticknor L.O."/>
            <person name="Wills P.L."/>
            <person name="Brettin T.S."/>
            <person name="Gilna P."/>
        </authorList>
    </citation>
    <scope>NUCLEOTIDE SEQUENCE [LARGE SCALE GENOMIC DNA]</scope>
    <source>
        <strain>97-27</strain>
    </source>
</reference>
<comment type="catalytic activity">
    <reaction evidence="1">
        <text>tRNA(Arg) + L-arginine + ATP = L-arginyl-tRNA(Arg) + AMP + diphosphate</text>
        <dbReference type="Rhea" id="RHEA:20301"/>
        <dbReference type="Rhea" id="RHEA-COMP:9658"/>
        <dbReference type="Rhea" id="RHEA-COMP:9673"/>
        <dbReference type="ChEBI" id="CHEBI:30616"/>
        <dbReference type="ChEBI" id="CHEBI:32682"/>
        <dbReference type="ChEBI" id="CHEBI:33019"/>
        <dbReference type="ChEBI" id="CHEBI:78442"/>
        <dbReference type="ChEBI" id="CHEBI:78513"/>
        <dbReference type="ChEBI" id="CHEBI:456215"/>
        <dbReference type="EC" id="6.1.1.19"/>
    </reaction>
</comment>
<comment type="subunit">
    <text evidence="1">Monomer.</text>
</comment>
<comment type="subcellular location">
    <subcellularLocation>
        <location evidence="1">Cytoplasm</location>
    </subcellularLocation>
</comment>
<comment type="similarity">
    <text evidence="1">Belongs to the class-I aminoacyl-tRNA synthetase family.</text>
</comment>
<accession>Q6HAS1</accession>
<keyword id="KW-0030">Aminoacyl-tRNA synthetase</keyword>
<keyword id="KW-0067">ATP-binding</keyword>
<keyword id="KW-0963">Cytoplasm</keyword>
<keyword id="KW-0436">Ligase</keyword>
<keyword id="KW-0547">Nucleotide-binding</keyword>
<keyword id="KW-0648">Protein biosynthesis</keyword>
<dbReference type="EC" id="6.1.1.19" evidence="1"/>
<dbReference type="EMBL" id="AE017355">
    <property type="protein sequence ID" value="AAT63452.1"/>
    <property type="molecule type" value="Genomic_DNA"/>
</dbReference>
<dbReference type="RefSeq" id="YP_039355.1">
    <property type="nucleotide sequence ID" value="NC_005957.1"/>
</dbReference>
<dbReference type="SMR" id="Q6HAS1"/>
<dbReference type="KEGG" id="btk:BT9727_5045"/>
<dbReference type="PATRIC" id="fig|281309.8.peg.5367"/>
<dbReference type="HOGENOM" id="CLU_006406_0_1_9"/>
<dbReference type="Proteomes" id="UP000001301">
    <property type="component" value="Chromosome"/>
</dbReference>
<dbReference type="GO" id="GO:0005737">
    <property type="term" value="C:cytoplasm"/>
    <property type="evidence" value="ECO:0007669"/>
    <property type="project" value="UniProtKB-SubCell"/>
</dbReference>
<dbReference type="GO" id="GO:0004814">
    <property type="term" value="F:arginine-tRNA ligase activity"/>
    <property type="evidence" value="ECO:0007669"/>
    <property type="project" value="UniProtKB-UniRule"/>
</dbReference>
<dbReference type="GO" id="GO:0005524">
    <property type="term" value="F:ATP binding"/>
    <property type="evidence" value="ECO:0007669"/>
    <property type="project" value="UniProtKB-UniRule"/>
</dbReference>
<dbReference type="GO" id="GO:0006420">
    <property type="term" value="P:arginyl-tRNA aminoacylation"/>
    <property type="evidence" value="ECO:0007669"/>
    <property type="project" value="UniProtKB-UniRule"/>
</dbReference>
<dbReference type="CDD" id="cd07956">
    <property type="entry name" value="Anticodon_Ia_Arg"/>
    <property type="match status" value="1"/>
</dbReference>
<dbReference type="CDD" id="cd00671">
    <property type="entry name" value="ArgRS_core"/>
    <property type="match status" value="1"/>
</dbReference>
<dbReference type="FunFam" id="1.10.730.10:FF:000008">
    <property type="entry name" value="Arginine--tRNA ligase"/>
    <property type="match status" value="1"/>
</dbReference>
<dbReference type="FunFam" id="3.30.1360.70:FF:000003">
    <property type="entry name" value="Arginine--tRNA ligase"/>
    <property type="match status" value="1"/>
</dbReference>
<dbReference type="FunFam" id="3.40.50.620:FF:000062">
    <property type="entry name" value="Arginine--tRNA ligase"/>
    <property type="match status" value="1"/>
</dbReference>
<dbReference type="Gene3D" id="3.30.1360.70">
    <property type="entry name" value="Arginyl tRNA synthetase N-terminal domain"/>
    <property type="match status" value="1"/>
</dbReference>
<dbReference type="Gene3D" id="3.40.50.620">
    <property type="entry name" value="HUPs"/>
    <property type="match status" value="1"/>
</dbReference>
<dbReference type="Gene3D" id="1.10.730.10">
    <property type="entry name" value="Isoleucyl-tRNA Synthetase, Domain 1"/>
    <property type="match status" value="1"/>
</dbReference>
<dbReference type="HAMAP" id="MF_00123">
    <property type="entry name" value="Arg_tRNA_synth"/>
    <property type="match status" value="1"/>
</dbReference>
<dbReference type="InterPro" id="IPR001412">
    <property type="entry name" value="aa-tRNA-synth_I_CS"/>
</dbReference>
<dbReference type="InterPro" id="IPR001278">
    <property type="entry name" value="Arg-tRNA-ligase"/>
</dbReference>
<dbReference type="InterPro" id="IPR005148">
    <property type="entry name" value="Arg-tRNA-synth_N"/>
</dbReference>
<dbReference type="InterPro" id="IPR036695">
    <property type="entry name" value="Arg-tRNA-synth_N_sf"/>
</dbReference>
<dbReference type="InterPro" id="IPR035684">
    <property type="entry name" value="ArgRS_core"/>
</dbReference>
<dbReference type="InterPro" id="IPR008909">
    <property type="entry name" value="DALR_anticod-bd"/>
</dbReference>
<dbReference type="InterPro" id="IPR014729">
    <property type="entry name" value="Rossmann-like_a/b/a_fold"/>
</dbReference>
<dbReference type="InterPro" id="IPR009080">
    <property type="entry name" value="tRNAsynth_Ia_anticodon-bd"/>
</dbReference>
<dbReference type="NCBIfam" id="TIGR00456">
    <property type="entry name" value="argS"/>
    <property type="match status" value="1"/>
</dbReference>
<dbReference type="PANTHER" id="PTHR11956:SF5">
    <property type="entry name" value="ARGININE--TRNA LIGASE, CYTOPLASMIC"/>
    <property type="match status" value="1"/>
</dbReference>
<dbReference type="PANTHER" id="PTHR11956">
    <property type="entry name" value="ARGINYL-TRNA SYNTHETASE"/>
    <property type="match status" value="1"/>
</dbReference>
<dbReference type="Pfam" id="PF03485">
    <property type="entry name" value="Arg_tRNA_synt_N"/>
    <property type="match status" value="1"/>
</dbReference>
<dbReference type="Pfam" id="PF05746">
    <property type="entry name" value="DALR_1"/>
    <property type="match status" value="1"/>
</dbReference>
<dbReference type="Pfam" id="PF00750">
    <property type="entry name" value="tRNA-synt_1d"/>
    <property type="match status" value="1"/>
</dbReference>
<dbReference type="PRINTS" id="PR01038">
    <property type="entry name" value="TRNASYNTHARG"/>
</dbReference>
<dbReference type="SMART" id="SM01016">
    <property type="entry name" value="Arg_tRNA_synt_N"/>
    <property type="match status" value="1"/>
</dbReference>
<dbReference type="SMART" id="SM00836">
    <property type="entry name" value="DALR_1"/>
    <property type="match status" value="1"/>
</dbReference>
<dbReference type="SUPFAM" id="SSF47323">
    <property type="entry name" value="Anticodon-binding domain of a subclass of class I aminoacyl-tRNA synthetases"/>
    <property type="match status" value="1"/>
</dbReference>
<dbReference type="SUPFAM" id="SSF55190">
    <property type="entry name" value="Arginyl-tRNA synthetase (ArgRS), N-terminal 'additional' domain"/>
    <property type="match status" value="1"/>
</dbReference>
<dbReference type="SUPFAM" id="SSF52374">
    <property type="entry name" value="Nucleotidylyl transferase"/>
    <property type="match status" value="1"/>
</dbReference>
<dbReference type="PROSITE" id="PS00178">
    <property type="entry name" value="AA_TRNA_LIGASE_I"/>
    <property type="match status" value="1"/>
</dbReference>
<gene>
    <name evidence="1" type="primary">argS2</name>
    <name type="ordered locus">BT9727_5045</name>
</gene>
<sequence length="556" mass="62433">MNSLEQVKGLIKEEIQAAVLKAELATEEQIPNVVLESPKDKTNGDFSTNMAMQLARVAKKAPRMIAEELVANFDKAKASIEKIEIAGPGFINFYMDNSYLTDLIPTIVNAGEAYGETNTGKGEKVQVEFVSANPTGDLHLGHARGAAVGDTLCNLLAKAGYDVSREYYINDAGNQIHNLALSVEARYMQALGLEKEMPEDGYHGADIIGIGKSLAEEFGDRYAKADEKESYEFYREYGLKYELAKLQKDLESFRVKFDVWFSETSLYKNGKIDQALAVLKERDEIFEEDGATWFRSMTYGDDKNRVLIKNDGSYTYLTPDIAYHRDKLERGFDKLINIWGADHHGYIPRMKAAIQALGYDKETLEVEIIQMVQLYQNGEKMKMSKRTGKAVTLRELMEEVGVDAMRYFFAMRSGDSHLDFDMDLAVSKSNENPVYYAQYAHARVCSILRQGEELGLATGGDVNYKLVTSEKEVELLKKLGEFPAVVADAAQKRLPHRITNYAFELAATLHSFYNAEKVLNQDNLELSKARYELMKAVRTTLQNALAIVGVSAPEKM</sequence>
<organism>
    <name type="scientific">Bacillus thuringiensis subsp. konkukian (strain 97-27)</name>
    <dbReference type="NCBI Taxonomy" id="281309"/>
    <lineage>
        <taxon>Bacteria</taxon>
        <taxon>Bacillati</taxon>
        <taxon>Bacillota</taxon>
        <taxon>Bacilli</taxon>
        <taxon>Bacillales</taxon>
        <taxon>Bacillaceae</taxon>
        <taxon>Bacillus</taxon>
        <taxon>Bacillus cereus group</taxon>
    </lineage>
</organism>
<name>SYR2_BACHK</name>
<proteinExistence type="inferred from homology"/>
<evidence type="ECO:0000255" key="1">
    <source>
        <dbReference type="HAMAP-Rule" id="MF_00123"/>
    </source>
</evidence>
<protein>
    <recommendedName>
        <fullName evidence="1">Arginine--tRNA ligase 2</fullName>
        <ecNumber evidence="1">6.1.1.19</ecNumber>
    </recommendedName>
    <alternativeName>
        <fullName evidence="1">Arginyl-tRNA synthetase 2</fullName>
        <shortName evidence="1">ArgRS 2</shortName>
    </alternativeName>
</protein>
<feature type="chain" id="PRO_0000241984" description="Arginine--tRNA ligase 2">
    <location>
        <begin position="1"/>
        <end position="556"/>
    </location>
</feature>
<feature type="short sequence motif" description="'HIGH' region">
    <location>
        <begin position="132"/>
        <end position="142"/>
    </location>
</feature>